<accession>Q7VF27</accession>
<feature type="chain" id="PRO_0000314339" description="Carboxy-S-adenosyl-L-methionine synthase">
    <location>
        <begin position="1"/>
        <end position="239"/>
    </location>
</feature>
<feature type="binding site" evidence="1">
    <location>
        <position position="35"/>
    </location>
    <ligand>
        <name>S-adenosyl-L-methionine</name>
        <dbReference type="ChEBI" id="CHEBI:59789"/>
    </ligand>
</feature>
<feature type="binding site" evidence="1">
    <location>
        <begin position="64"/>
        <end position="66"/>
    </location>
    <ligand>
        <name>S-adenosyl-L-methionine</name>
        <dbReference type="ChEBI" id="CHEBI:59789"/>
    </ligand>
</feature>
<feature type="binding site" evidence="1">
    <location>
        <begin position="114"/>
        <end position="115"/>
    </location>
    <ligand>
        <name>S-adenosyl-L-methionine</name>
        <dbReference type="ChEBI" id="CHEBI:59789"/>
    </ligand>
</feature>
<feature type="binding site" evidence="1">
    <location>
        <position position="129"/>
    </location>
    <ligand>
        <name>S-adenosyl-L-methionine</name>
        <dbReference type="ChEBI" id="CHEBI:59789"/>
    </ligand>
</feature>
<feature type="binding site" evidence="1">
    <location>
        <position position="196"/>
    </location>
    <ligand>
        <name>S-adenosyl-L-methionine</name>
        <dbReference type="ChEBI" id="CHEBI:59789"/>
    </ligand>
</feature>
<protein>
    <recommendedName>
        <fullName evidence="1">Carboxy-S-adenosyl-L-methionine synthase</fullName>
        <shortName evidence="1">Cx-SAM synthase</shortName>
        <ecNumber evidence="1">2.1.3.-</ecNumber>
    </recommendedName>
</protein>
<organism>
    <name type="scientific">Helicobacter hepaticus (strain ATCC 51449 / 3B1)</name>
    <dbReference type="NCBI Taxonomy" id="235279"/>
    <lineage>
        <taxon>Bacteria</taxon>
        <taxon>Pseudomonadati</taxon>
        <taxon>Campylobacterota</taxon>
        <taxon>Epsilonproteobacteria</taxon>
        <taxon>Campylobacterales</taxon>
        <taxon>Helicobacteraceae</taxon>
        <taxon>Helicobacter</taxon>
    </lineage>
</organism>
<proteinExistence type="inferred from homology"/>
<name>CMOA_HELHP</name>
<evidence type="ECO:0000255" key="1">
    <source>
        <dbReference type="HAMAP-Rule" id="MF_01589"/>
    </source>
</evidence>
<comment type="function">
    <text evidence="1">Catalyzes the conversion of S-adenosyl-L-methionine (SAM) to carboxy-S-adenosyl-L-methionine (Cx-SAM).</text>
</comment>
<comment type="catalytic activity">
    <reaction evidence="1">
        <text>prephenate + S-adenosyl-L-methionine = carboxy-S-adenosyl-L-methionine + 3-phenylpyruvate + H2O</text>
        <dbReference type="Rhea" id="RHEA:51692"/>
        <dbReference type="ChEBI" id="CHEBI:15377"/>
        <dbReference type="ChEBI" id="CHEBI:18005"/>
        <dbReference type="ChEBI" id="CHEBI:29934"/>
        <dbReference type="ChEBI" id="CHEBI:59789"/>
        <dbReference type="ChEBI" id="CHEBI:134278"/>
    </reaction>
</comment>
<comment type="subunit">
    <text evidence="1">Homodimer.</text>
</comment>
<comment type="similarity">
    <text evidence="1">Belongs to the class I-like SAM-binding methyltransferase superfamily. Cx-SAM synthase family.</text>
</comment>
<dbReference type="EC" id="2.1.3.-" evidence="1"/>
<dbReference type="EMBL" id="AE017125">
    <property type="protein sequence ID" value="AAP78449.1"/>
    <property type="molecule type" value="Genomic_DNA"/>
</dbReference>
<dbReference type="RefSeq" id="WP_011116691.1">
    <property type="nucleotide sequence ID" value="NC_004917.1"/>
</dbReference>
<dbReference type="SMR" id="Q7VF27"/>
<dbReference type="STRING" id="235279.HH_1852"/>
<dbReference type="KEGG" id="hhe:HH_1852"/>
<dbReference type="eggNOG" id="COG2226">
    <property type="taxonomic scope" value="Bacteria"/>
</dbReference>
<dbReference type="HOGENOM" id="CLU_078475_0_0_7"/>
<dbReference type="OrthoDB" id="5386938at2"/>
<dbReference type="Proteomes" id="UP000002495">
    <property type="component" value="Chromosome"/>
</dbReference>
<dbReference type="GO" id="GO:0016743">
    <property type="term" value="F:carboxyl- or carbamoyltransferase activity"/>
    <property type="evidence" value="ECO:0007669"/>
    <property type="project" value="UniProtKB-UniRule"/>
</dbReference>
<dbReference type="GO" id="GO:1904047">
    <property type="term" value="F:S-adenosyl-L-methionine binding"/>
    <property type="evidence" value="ECO:0007669"/>
    <property type="project" value="UniProtKB-UniRule"/>
</dbReference>
<dbReference type="GO" id="GO:0002098">
    <property type="term" value="P:tRNA wobble uridine modification"/>
    <property type="evidence" value="ECO:0007669"/>
    <property type="project" value="InterPro"/>
</dbReference>
<dbReference type="CDD" id="cd02440">
    <property type="entry name" value="AdoMet_MTases"/>
    <property type="match status" value="1"/>
</dbReference>
<dbReference type="Gene3D" id="3.40.50.150">
    <property type="entry name" value="Vaccinia Virus protein VP39"/>
    <property type="match status" value="1"/>
</dbReference>
<dbReference type="HAMAP" id="MF_01589">
    <property type="entry name" value="Cx_SAM_synthase"/>
    <property type="match status" value="1"/>
</dbReference>
<dbReference type="InterPro" id="IPR005271">
    <property type="entry name" value="CmoA"/>
</dbReference>
<dbReference type="InterPro" id="IPR041698">
    <property type="entry name" value="Methyltransf_25"/>
</dbReference>
<dbReference type="InterPro" id="IPR029063">
    <property type="entry name" value="SAM-dependent_MTases_sf"/>
</dbReference>
<dbReference type="NCBIfam" id="TIGR00740">
    <property type="entry name" value="carboxy-S-adenosyl-L-methionine synthase CmoA"/>
    <property type="match status" value="1"/>
</dbReference>
<dbReference type="PANTHER" id="PTHR43861:SF2">
    <property type="entry name" value="CARBOXY-S-ADENOSYL-L-METHIONINE SYNTHASE"/>
    <property type="match status" value="1"/>
</dbReference>
<dbReference type="PANTHER" id="PTHR43861">
    <property type="entry name" value="TRANS-ACONITATE 2-METHYLTRANSFERASE-RELATED"/>
    <property type="match status" value="1"/>
</dbReference>
<dbReference type="Pfam" id="PF13649">
    <property type="entry name" value="Methyltransf_25"/>
    <property type="match status" value="1"/>
</dbReference>
<dbReference type="PIRSF" id="PIRSF006325">
    <property type="entry name" value="MeTrfase_bac"/>
    <property type="match status" value="1"/>
</dbReference>
<dbReference type="SUPFAM" id="SSF53335">
    <property type="entry name" value="S-adenosyl-L-methionine-dependent methyltransferases"/>
    <property type="match status" value="1"/>
</dbReference>
<sequence>MKDRIFKQDIGKQFEFDAQVASVFDDMLERSIPHYKEVLGLIVDFCSYTLESSKSAIPLVYDLGSSTGTTLLALSQALSTHTRFIGIDSSQAMIDKASLKAQAYNANIEFICTDLLEYDFLHSDIVIANYSLQFIRPMQRPALLQKIYNALTEGGILIVSEKMTSHHRILDRQMIERYVRYKQEQGYTKTEISKKREALENVLVPFSLEENIAMLKDIGFSGIEVLFKWVNFGTLIAKK</sequence>
<gene>
    <name evidence="1" type="primary">cmoA</name>
    <name type="ordered locus">HH_1852</name>
</gene>
<keyword id="KW-1185">Reference proteome</keyword>
<keyword id="KW-0949">S-adenosyl-L-methionine</keyword>
<keyword id="KW-0808">Transferase</keyword>
<reference key="1">
    <citation type="journal article" date="2003" name="Proc. Natl. Acad. Sci. U.S.A.">
        <title>The complete genome sequence of the carcinogenic bacterium Helicobacter hepaticus.</title>
        <authorList>
            <person name="Suerbaum S."/>
            <person name="Josenhans C."/>
            <person name="Sterzenbach T."/>
            <person name="Drescher B."/>
            <person name="Brandt P."/>
            <person name="Bell M."/>
            <person name="Droege M."/>
            <person name="Fartmann B."/>
            <person name="Fischer H.-P."/>
            <person name="Ge Z."/>
            <person name="Hoerster A."/>
            <person name="Holland R."/>
            <person name="Klein K."/>
            <person name="Koenig J."/>
            <person name="Macko L."/>
            <person name="Mendz G.L."/>
            <person name="Nyakatura G."/>
            <person name="Schauer D.B."/>
            <person name="Shen Z."/>
            <person name="Weber J."/>
            <person name="Frosch M."/>
            <person name="Fox J.G."/>
        </authorList>
    </citation>
    <scope>NUCLEOTIDE SEQUENCE [LARGE SCALE GENOMIC DNA]</scope>
    <source>
        <strain>ATCC 51449 / 3B1</strain>
    </source>
</reference>